<proteinExistence type="inferred from homology"/>
<dbReference type="EMBL" id="AY261360">
    <property type="status" value="NOT_ANNOTATED_CDS"/>
    <property type="molecule type" value="Genomic_DNA"/>
</dbReference>
<dbReference type="Proteomes" id="UP000000861">
    <property type="component" value="Segment"/>
</dbReference>
<dbReference type="GO" id="GO:0039723">
    <property type="term" value="P:symbiont-mediated suppression of host cytoplasmic pattern recognition receptor signaling pathway via inhibition of TBK1 activity"/>
    <property type="evidence" value="ECO:0007669"/>
    <property type="project" value="UniProtKB-KW"/>
</dbReference>
<dbReference type="GO" id="GO:0085034">
    <property type="term" value="P:symbiont-mediated suppression of host NF-kappaB cascade"/>
    <property type="evidence" value="ECO:0007669"/>
    <property type="project" value="UniProtKB-KW"/>
</dbReference>
<dbReference type="GO" id="GO:0039722">
    <property type="term" value="P:symbiont-mediated suppression of host toll-like receptor signaling pathway"/>
    <property type="evidence" value="ECO:0007669"/>
    <property type="project" value="UniProtKB-KW"/>
</dbReference>
<dbReference type="InterPro" id="IPR003670">
    <property type="entry name" value="ASFV_DP96R"/>
</dbReference>
<dbReference type="Pfam" id="PF02512">
    <property type="entry name" value="UK"/>
    <property type="match status" value="2"/>
</dbReference>
<organismHost>
    <name type="scientific">Ornithodoros</name>
    <name type="common">relapsing fever ticks</name>
    <dbReference type="NCBI Taxonomy" id="6937"/>
</organismHost>
<organismHost>
    <name type="scientific">Phacochoerus aethiopicus</name>
    <name type="common">Warthog</name>
    <dbReference type="NCBI Taxonomy" id="85517"/>
</organismHost>
<organismHost>
    <name type="scientific">Phacochoerus africanus</name>
    <name type="common">Warthog</name>
    <dbReference type="NCBI Taxonomy" id="41426"/>
</organismHost>
<organismHost>
    <name type="scientific">Potamochoerus larvatus</name>
    <name type="common">Bushpig</name>
    <dbReference type="NCBI Taxonomy" id="273792"/>
</organismHost>
<organismHost>
    <name type="scientific">Sus scrofa</name>
    <name type="common">Pig</name>
    <dbReference type="NCBI Taxonomy" id="9823"/>
</organismHost>
<reference key="1">
    <citation type="submission" date="2003-03" db="EMBL/GenBank/DDBJ databases">
        <title>African swine fever virus genomes.</title>
        <authorList>
            <person name="Kutish G.F."/>
            <person name="Rock D.L."/>
        </authorList>
    </citation>
    <scope>NUCLEOTIDE SEQUENCE [LARGE SCALE GENOMIC DNA]</scope>
</reference>
<comment type="function">
    <text evidence="1">Inhibits cGAS-STING-mediated type I IFN expression and NF-kB activation by inhibiting TBK1 and IKBKB/IKKB (By similarity). Inhibits host TBK1 phosphorylation (By similarity).</text>
</comment>
<comment type="similarity">
    <text evidence="3">Belongs to the asfivirus DP96R family.</text>
</comment>
<organism>
    <name type="scientific">African swine fever virus (isolate Pig/Kenya/KEN-50/1950)</name>
    <name type="common">ASFV</name>
    <dbReference type="NCBI Taxonomy" id="561445"/>
    <lineage>
        <taxon>Viruses</taxon>
        <taxon>Varidnaviria</taxon>
        <taxon>Bamfordvirae</taxon>
        <taxon>Nucleocytoviricota</taxon>
        <taxon>Pokkesviricetes</taxon>
        <taxon>Asfuvirales</taxon>
        <taxon>Asfarviridae</taxon>
        <taxon>Asfivirus</taxon>
        <taxon>African swine fever virus</taxon>
    </lineage>
</organism>
<protein>
    <recommendedName>
        <fullName evidence="3">TBK1 inhibitor DP96R</fullName>
    </recommendedName>
</protein>
<accession>P0C758</accession>
<gene>
    <name type="ordered locus">Ken-168</name>
</gene>
<sequence length="136" mass="14894">MSTCNYSPKEKPVDVNNVSEKSAAVNNVPEKPAIVNNTSEKAVDVNNVSEKPVDVNNVSEKSAAVNNALEKPAGANNIPEKSAGRMTSSEWIAEYWKGIKRGNDVPCCCPRKMTSADEKFPVFCKGYLMRSMHKDD</sequence>
<evidence type="ECO:0000250" key="1">
    <source>
        <dbReference type="UniProtKB" id="Q65213"/>
    </source>
</evidence>
<evidence type="ECO:0000256" key="2">
    <source>
        <dbReference type="SAM" id="MobiDB-lite"/>
    </source>
</evidence>
<evidence type="ECO:0000305" key="3"/>
<name>DP96R_ASFK5</name>
<feature type="chain" id="PRO_0000379089" description="TBK1 inhibitor DP96R">
    <location>
        <begin position="1"/>
        <end position="136"/>
    </location>
</feature>
<feature type="region of interest" description="Disordered" evidence="2">
    <location>
        <begin position="66"/>
        <end position="86"/>
    </location>
</feature>
<keyword id="KW-0945">Host-virus interaction</keyword>
<keyword id="KW-1090">Inhibition of host innate immune response by virus</keyword>
<keyword id="KW-1100">Inhibition of host NF-kappa-B by virus</keyword>
<keyword id="KW-1223">Inhibition of host TBK1 by virus</keyword>
<keyword id="KW-1225">Inhibition of host TLR pathway by virus</keyword>
<keyword id="KW-0899">Viral immunoevasion</keyword>